<accession>Q0G9V0</accession>
<keyword id="KW-0050">Antiport</keyword>
<keyword id="KW-0150">Chloroplast</keyword>
<keyword id="KW-0375">Hydrogen ion transport</keyword>
<keyword id="KW-0406">Ion transport</keyword>
<keyword id="KW-0472">Membrane</keyword>
<keyword id="KW-0934">Plastid</keyword>
<keyword id="KW-1001">Plastid inner membrane</keyword>
<keyword id="KW-0630">Potassium</keyword>
<keyword id="KW-0633">Potassium transport</keyword>
<keyword id="KW-0812">Transmembrane</keyword>
<keyword id="KW-1133">Transmembrane helix</keyword>
<keyword id="KW-0813">Transport</keyword>
<evidence type="ECO:0000255" key="1">
    <source>
        <dbReference type="HAMAP-Rule" id="MF_01308"/>
    </source>
</evidence>
<evidence type="ECO:0000305" key="2"/>
<gene>
    <name evidence="1" type="primary">cemA</name>
</gene>
<geneLocation type="chloroplast"/>
<sequence>MSKKKAFTSLLYLASIVFLPWWISLSFNKSLESWVTDWWNTRQSEIFWNDIQEKNIIKNFIELEEILLLEEMIKEDSETHLQNLRIGIHKETLQLIKIHNEDHIHTILHFSTNIICFVILSGYSILGNEELVILNSWAQEFIYNLSDTIKAFWILLLTDFFIGFHSTRGWELMIGFVYKDFGFAHNDQILSSLVCIFPVILDTLFKFWVFRYLNCVSPSLVVIYHSMNE</sequence>
<organism>
    <name type="scientific">Daucus carota</name>
    <name type="common">Wild carrot</name>
    <dbReference type="NCBI Taxonomy" id="4039"/>
    <lineage>
        <taxon>Eukaryota</taxon>
        <taxon>Viridiplantae</taxon>
        <taxon>Streptophyta</taxon>
        <taxon>Embryophyta</taxon>
        <taxon>Tracheophyta</taxon>
        <taxon>Spermatophyta</taxon>
        <taxon>Magnoliopsida</taxon>
        <taxon>eudicotyledons</taxon>
        <taxon>Gunneridae</taxon>
        <taxon>Pentapetalae</taxon>
        <taxon>asterids</taxon>
        <taxon>campanulids</taxon>
        <taxon>Apiales</taxon>
        <taxon>Apiaceae</taxon>
        <taxon>Apioideae</taxon>
        <taxon>Scandiceae</taxon>
        <taxon>Daucinae</taxon>
        <taxon>Daucus</taxon>
        <taxon>Daucus sect. Daucus</taxon>
    </lineage>
</organism>
<comment type="function">
    <text evidence="1">Contributes to K(+)/H(+) antiport activity by supporting proton efflux to control proton extrusion and homeostasis in chloroplasts in a light-dependent manner to modulate photosynthesis. Prevents excessive induction of non-photochemical quenching (NPQ) under continuous-light conditions. Indirectly promotes efficient inorganic carbon uptake into chloroplasts.</text>
</comment>
<comment type="catalytic activity">
    <reaction evidence="1">
        <text>K(+)(in) + H(+)(out) = K(+)(out) + H(+)(in)</text>
        <dbReference type="Rhea" id="RHEA:29467"/>
        <dbReference type="ChEBI" id="CHEBI:15378"/>
        <dbReference type="ChEBI" id="CHEBI:29103"/>
    </reaction>
</comment>
<comment type="subcellular location">
    <subcellularLocation>
        <location evidence="1">Plastid</location>
        <location evidence="1">Chloroplast inner membrane</location>
        <topology evidence="1">Multi-pass membrane protein</topology>
    </subcellularLocation>
</comment>
<comment type="similarity">
    <text evidence="1 2">Belongs to the CemA family.</text>
</comment>
<protein>
    <recommendedName>
        <fullName evidence="1">Potassium/proton antiporter CemA</fullName>
    </recommendedName>
    <alternativeName>
        <fullName evidence="1">Chloroplast envelope membrane protein A</fullName>
        <shortName evidence="1">CemA</shortName>
    </alternativeName>
</protein>
<reference key="1">
    <citation type="journal article" date="2006" name="BMC Genomics">
        <title>Complete plastid genome sequence of Daucus carota: implications for biotechnology and phylogeny of angiosperms.</title>
        <authorList>
            <person name="Ruhlman T."/>
            <person name="Lee S.-B."/>
            <person name="Jansen R.K."/>
            <person name="Hostetler J.B."/>
            <person name="Tallon L.J."/>
            <person name="Town C.D."/>
            <person name="Daniell H."/>
        </authorList>
    </citation>
    <scope>NUCLEOTIDE SEQUENCE [LARGE SCALE GENOMIC DNA]</scope>
    <source>
        <strain>cv. Danvers Half-long</strain>
    </source>
</reference>
<feature type="chain" id="PRO_0000275235" description="Potassium/proton antiporter CemA">
    <location>
        <begin position="1"/>
        <end position="229"/>
    </location>
</feature>
<feature type="transmembrane region" description="Helical" evidence="1">
    <location>
        <begin position="7"/>
        <end position="27"/>
    </location>
</feature>
<feature type="transmembrane region" description="Helical" evidence="1">
    <location>
        <begin position="114"/>
        <end position="134"/>
    </location>
</feature>
<feature type="transmembrane region" description="Helical" evidence="1">
    <location>
        <begin position="145"/>
        <end position="165"/>
    </location>
</feature>
<feature type="transmembrane region" description="Helical" evidence="1">
    <location>
        <begin position="189"/>
        <end position="209"/>
    </location>
</feature>
<proteinExistence type="inferred from homology"/>
<dbReference type="EMBL" id="DQ898156">
    <property type="protein sequence ID" value="ABI32436.1"/>
    <property type="molecule type" value="Genomic_DNA"/>
</dbReference>
<dbReference type="RefSeq" id="YP_740129.1">
    <property type="nucleotide sequence ID" value="NC_008325.1"/>
</dbReference>
<dbReference type="SMR" id="Q0G9V0"/>
<dbReference type="GeneID" id="4266755"/>
<dbReference type="OMA" id="VVIYHAI"/>
<dbReference type="GO" id="GO:0009706">
    <property type="term" value="C:chloroplast inner membrane"/>
    <property type="evidence" value="ECO:0007669"/>
    <property type="project" value="UniProtKB-SubCell"/>
</dbReference>
<dbReference type="GO" id="GO:0015297">
    <property type="term" value="F:antiporter activity"/>
    <property type="evidence" value="ECO:0007669"/>
    <property type="project" value="UniProtKB-KW"/>
</dbReference>
<dbReference type="GO" id="GO:0015078">
    <property type="term" value="F:proton transmembrane transporter activity"/>
    <property type="evidence" value="ECO:0007669"/>
    <property type="project" value="UniProtKB-UniRule"/>
</dbReference>
<dbReference type="GO" id="GO:0006813">
    <property type="term" value="P:potassium ion transport"/>
    <property type="evidence" value="ECO:0007669"/>
    <property type="project" value="UniProtKB-UniRule"/>
</dbReference>
<dbReference type="HAMAP" id="MF_01308">
    <property type="entry name" value="CemA_PxcA"/>
    <property type="match status" value="1"/>
</dbReference>
<dbReference type="InterPro" id="IPR004282">
    <property type="entry name" value="CemA"/>
</dbReference>
<dbReference type="PANTHER" id="PTHR33650:SF2">
    <property type="entry name" value="CHLOROPLAST ENVELOPE MEMBRANE PROTEIN"/>
    <property type="match status" value="1"/>
</dbReference>
<dbReference type="PANTHER" id="PTHR33650">
    <property type="entry name" value="CHLOROPLAST ENVELOPE MEMBRANE PROTEIN-RELATED"/>
    <property type="match status" value="1"/>
</dbReference>
<dbReference type="Pfam" id="PF03040">
    <property type="entry name" value="CemA"/>
    <property type="match status" value="1"/>
</dbReference>
<name>CEMA_DAUCA</name>